<accession>P54819</accession>
<accession>A8K6L1</accession>
<accession>B4DHH7</accession>
<accession>B4DL64</accession>
<accession>Q16856</accession>
<accession>Q5EB54</accession>
<accession>Q5TIF7</accession>
<accession>Q8TCY2</accession>
<accession>Q8TCY3</accession>
<proteinExistence type="evidence at protein level"/>
<sequence length="239" mass="26478">MAPSVPAAEPEYPKGIRAVLLGPPGAGKGTQAPRLAENFCVCHLATGDMLRAMVASGSELGKKLKATMDAGKLVSDEMVVELIEKNLETPLCKNGFLLDGFPRTVRQAEMLDDLMEKRKEKLDSVIEFSIPDSLLIRRITGRLIHPKSGRSYHEEFNPPKEPMKDDITGEPLIRRSDDNEKALKIRLQAYHTQTTPLIEYYRKRGIHSAIDASQTPDVVFASILAAFSKATCKDLVMFI</sequence>
<gene>
    <name evidence="2" type="primary">AK2</name>
    <name type="synonym">ADK2</name>
</gene>
<protein>
    <recommendedName>
        <fullName evidence="2">Adenylate kinase 2, mitochondrial</fullName>
        <shortName evidence="2">AK 2</shortName>
        <ecNumber evidence="2">2.7.4.3</ecNumber>
    </recommendedName>
    <alternativeName>
        <fullName evidence="2">ATP-AMP transphosphorylase 2</fullName>
    </alternativeName>
    <alternativeName>
        <fullName evidence="2">ATP:AMP phosphotransferase</fullName>
    </alternativeName>
    <alternativeName>
        <fullName evidence="2">Adenylate monophosphate kinase</fullName>
    </alternativeName>
    <component>
        <recommendedName>
            <fullName evidence="2">Adenylate kinase 2, mitochondrial, N-terminally processed</fullName>
        </recommendedName>
    </component>
</protein>
<comment type="function">
    <text evidence="2 4">Catalyzes the reversible transfer of the terminal phosphate group between ATP and AMP. Plays an important role in cellular energy homeostasis and in adenine nucleotide metabolism. Adenylate kinase activity is critical for regulation of the phosphate utilization and the AMP de novo biosynthesis pathways. Plays a key role in hematopoiesis.</text>
</comment>
<comment type="catalytic activity">
    <reaction evidence="2">
        <text>AMP + ATP = 2 ADP</text>
        <dbReference type="Rhea" id="RHEA:12973"/>
        <dbReference type="ChEBI" id="CHEBI:30616"/>
        <dbReference type="ChEBI" id="CHEBI:456215"/>
        <dbReference type="ChEBI" id="CHEBI:456216"/>
        <dbReference type="EC" id="2.7.4.3"/>
    </reaction>
</comment>
<comment type="subunit">
    <text evidence="2">Monomer.</text>
</comment>
<comment type="interaction">
    <interactant intactId="EBI-1056291">
        <id>P54819</id>
    </interactant>
    <interactant intactId="EBI-930964">
        <id>P54253</id>
        <label>ATXN1</label>
    </interactant>
    <organismsDiffer>false</organismsDiffer>
    <experiments>3</experiments>
</comment>
<comment type="interaction">
    <interactant intactId="EBI-1056291">
        <id>P54819</id>
    </interactant>
    <interactant intactId="EBI-716404">
        <id>P16284</id>
        <label>PECAM1</label>
    </interactant>
    <organismsDiffer>false</organismsDiffer>
    <experiments>3</experiments>
</comment>
<comment type="interaction">
    <interactant intactId="EBI-1056291">
        <id>P54819</id>
    </interactant>
    <interactant intactId="EBI-50433196">
        <id>A0A6Q8PF08</id>
        <label>PMP22</label>
    </interactant>
    <organismsDiffer>false</organismsDiffer>
    <experiments>3</experiments>
</comment>
<comment type="interaction">
    <interactant intactId="EBI-1056291">
        <id>P54819</id>
    </interactant>
    <interactant intactId="EBI-476586">
        <id>P17612</id>
        <label>PRKACA</label>
    </interactant>
    <organismsDiffer>false</organismsDiffer>
    <experiments>3</experiments>
</comment>
<comment type="interaction">
    <interactant intactId="EBI-1056291">
        <id>P54819</id>
    </interactant>
    <interactant intactId="EBI-2010251">
        <id>P49810</id>
        <label>PSEN2</label>
    </interactant>
    <organismsDiffer>false</organismsDiffer>
    <experiments>3</experiments>
</comment>
<comment type="interaction">
    <interactant intactId="EBI-1056291">
        <id>P54819</id>
    </interactant>
    <interactant intactId="EBI-350723">
        <id>P50454</id>
        <label>SERPINH1</label>
    </interactant>
    <organismsDiffer>false</organismsDiffer>
    <experiments>3</experiments>
</comment>
<comment type="interaction">
    <interactant intactId="EBI-1056291">
        <id>P54819</id>
    </interactant>
    <interactant intactId="EBI-296151">
        <id>P37173</id>
        <label>TGFBR2</label>
    </interactant>
    <organismsDiffer>false</organismsDiffer>
    <experiments>3</experiments>
</comment>
<comment type="interaction">
    <interactant intactId="EBI-1056291">
        <id>P54819</id>
    </interactant>
    <interactant intactId="EBI-353844">
        <id>P08670</id>
        <label>VIM</label>
    </interactant>
    <organismsDiffer>false</organismsDiffer>
    <experiments>3</experiments>
</comment>
<comment type="subcellular location">
    <subcellularLocation>
        <location evidence="2">Mitochondrion intermembrane space</location>
    </subcellularLocation>
</comment>
<comment type="alternative products">
    <event type="alternative splicing"/>
    <isoform>
        <id>P54819-1</id>
        <name>1</name>
        <name>AK2A</name>
        <name>AK2isoA</name>
        <sequence type="displayed"/>
    </isoform>
    <isoform>
        <id>P54819-2</id>
        <name>2</name>
        <name>AK2B</name>
        <name>AK2isoB</name>
        <sequence type="described" ref="VSP_002790"/>
    </isoform>
    <isoform>
        <id>P54819-3</id>
        <name>3</name>
        <name>AK2C</name>
        <sequence type="described" ref="VSP_002791"/>
    </isoform>
    <isoform>
        <id>P54819-4</id>
        <name>4</name>
        <name>AK2D</name>
        <sequence type="described" ref="VSP_002792 VSP_002793 VSP_002794"/>
    </isoform>
    <isoform>
        <id>P54819-5</id>
        <name>5</name>
        <sequence type="described" ref="VSP_036503 VSP_002790"/>
    </isoform>
    <isoform>
        <id>P54819-6</id>
        <name>6</name>
        <sequence type="described" ref="VSP_002792"/>
    </isoform>
</comment>
<comment type="tissue specificity">
    <text evidence="5">Present in most tissues. Present at high level in heart, liver and kidney, and at low level in brain, skeletal muscle and skin. Present in thrombocytes but not in erythrocytes, which lack mitochondria. Present in all nucleated cell populations from blood, while AK1 is mostly absent. In spleen and lymph nodes, mononuclear cells lack AK1, whereas AK2 is readily detectable. These results indicate that leukocytes may be susceptible to defects caused by the lack of AK2, as they do not express AK1 in sufficient amounts to compensate for the AK2 functional deficits (at protein level).</text>
</comment>
<comment type="domain">
    <text evidence="2 14">Consists of three domains, a large central CORE domain and two small peripheral domains, NMPbind and LID, which undergo movements during catalysis. The LID domain closes over the site of phosphoryl transfer upon ATP binding. Assembling and dissambling the active center during each catalytic cycle provides an effective means to prevent ATP hydrolysis.</text>
</comment>
<comment type="disease" evidence="4 5">
    <disease id="DI-02261">
        <name>Reticular dysgenesis</name>
        <acronym>RDYS</acronym>
        <description>A fatal form of severe combined immunodeficiency, characterized by absence of granulocytes, almost complete deficiency of lymphocytes in peripheral blood, hypoplasia of the thymus and secondary lymphoid organs, and lack of innate and adaptive humoral and cellular immunity, leading to fatal septicemia within days after birth. In bone marrow of individuals with reticular dysgenesis, myeloid differentiation is blocked at the promyelocytic stage, whereas erythro- and megakaryocytic maturation is generally normal. Inheritance is autosomal recessive.</description>
        <dbReference type="MIM" id="267500"/>
    </disease>
    <text>The disease is caused by variants affecting the gene represented in this entry.</text>
</comment>
<comment type="similarity">
    <text evidence="2">Belongs to the adenylate kinase family. AK2 subfamily.</text>
</comment>
<name>KAD2_HUMAN</name>
<dbReference type="EC" id="2.7.4.3" evidence="2"/>
<dbReference type="EMBL" id="U39945">
    <property type="protein sequence ID" value="AAC52061.1"/>
    <property type="molecule type" value="mRNA"/>
</dbReference>
<dbReference type="EMBL" id="U84371">
    <property type="protein sequence ID" value="AAB41790.1"/>
    <property type="molecule type" value="mRNA"/>
</dbReference>
<dbReference type="EMBL" id="U54645">
    <property type="protein sequence ID" value="AAC13881.1"/>
    <property type="molecule type" value="mRNA"/>
</dbReference>
<dbReference type="EMBL" id="AB005621">
    <property type="protein sequence ID" value="BAC16747.1"/>
    <property type="molecule type" value="mRNA"/>
</dbReference>
<dbReference type="EMBL" id="AB005622">
    <property type="protein sequence ID" value="BAC16748.1"/>
    <property type="molecule type" value="mRNA"/>
</dbReference>
<dbReference type="EMBL" id="AY080899">
    <property type="protein sequence ID" value="AAL87027.1"/>
    <property type="molecule type" value="mRNA"/>
</dbReference>
<dbReference type="EMBL" id="AY080900">
    <property type="protein sequence ID" value="AAL87028.1"/>
    <property type="molecule type" value="mRNA"/>
</dbReference>
<dbReference type="EMBL" id="AK291676">
    <property type="protein sequence ID" value="BAF84365.1"/>
    <property type="molecule type" value="mRNA"/>
</dbReference>
<dbReference type="EMBL" id="AK295105">
    <property type="protein sequence ID" value="BAG58139.1"/>
    <property type="molecule type" value="mRNA"/>
</dbReference>
<dbReference type="EMBL" id="AK296863">
    <property type="protein sequence ID" value="BAG59426.1"/>
    <property type="molecule type" value="mRNA"/>
</dbReference>
<dbReference type="EMBL" id="AB451267">
    <property type="protein sequence ID" value="BAG70081.1"/>
    <property type="molecule type" value="mRNA"/>
</dbReference>
<dbReference type="EMBL" id="AB451394">
    <property type="protein sequence ID" value="BAG70208.1"/>
    <property type="molecule type" value="mRNA"/>
</dbReference>
<dbReference type="EMBL" id="AL020995">
    <property type="status" value="NOT_ANNOTATED_CDS"/>
    <property type="molecule type" value="Genomic_DNA"/>
</dbReference>
<dbReference type="EMBL" id="CH471059">
    <property type="protein sequence ID" value="EAX07484.1"/>
    <property type="molecule type" value="Genomic_DNA"/>
</dbReference>
<dbReference type="EMBL" id="CH471059">
    <property type="protein sequence ID" value="EAX07486.1"/>
    <property type="molecule type" value="Genomic_DNA"/>
</dbReference>
<dbReference type="EMBL" id="BC009405">
    <property type="protein sequence ID" value="AAH09405.1"/>
    <property type="molecule type" value="mRNA"/>
</dbReference>
<dbReference type="EMBL" id="BC070127">
    <property type="protein sequence ID" value="AAH70127.1"/>
    <property type="molecule type" value="mRNA"/>
</dbReference>
<dbReference type="EMBL" id="BC090040">
    <property type="protein sequence ID" value="AAH90040.1"/>
    <property type="molecule type" value="mRNA"/>
</dbReference>
<dbReference type="CCDS" id="CCDS373.1">
    <molecule id="P54819-2"/>
</dbReference>
<dbReference type="CCDS" id="CCDS374.1">
    <molecule id="P54819-1"/>
</dbReference>
<dbReference type="PIR" id="G02248">
    <property type="entry name" value="G02248"/>
</dbReference>
<dbReference type="PIR" id="JC5893">
    <property type="entry name" value="JC5893"/>
</dbReference>
<dbReference type="RefSeq" id="NP_001186128.1">
    <molecule id="P54819-5"/>
    <property type="nucleotide sequence ID" value="NM_001199199.3"/>
</dbReference>
<dbReference type="RefSeq" id="NP_001306068.1">
    <property type="nucleotide sequence ID" value="NM_001319139.1"/>
</dbReference>
<dbReference type="RefSeq" id="NP_001306069.1">
    <molecule id="P54819-6"/>
    <property type="nucleotide sequence ID" value="NM_001319140.2"/>
</dbReference>
<dbReference type="RefSeq" id="NP_001616.1">
    <molecule id="P54819-1"/>
    <property type="nucleotide sequence ID" value="NM_001625.4"/>
</dbReference>
<dbReference type="RefSeq" id="NP_037543.1">
    <molecule id="P54819-2"/>
    <property type="nucleotide sequence ID" value="NM_013411.5"/>
</dbReference>
<dbReference type="PDB" id="2C9Y">
    <property type="method" value="X-ray"/>
    <property type="resolution" value="2.10 A"/>
    <property type="chains" value="A=1-239"/>
</dbReference>
<dbReference type="PDBsum" id="2C9Y"/>
<dbReference type="SMR" id="P54819"/>
<dbReference type="BioGRID" id="106707">
    <property type="interactions" value="174"/>
</dbReference>
<dbReference type="CORUM" id="P54819"/>
<dbReference type="FunCoup" id="P54819">
    <property type="interactions" value="2009"/>
</dbReference>
<dbReference type="IntAct" id="P54819">
    <property type="interactions" value="74"/>
</dbReference>
<dbReference type="MINT" id="P54819"/>
<dbReference type="STRING" id="9606.ENSP00000499935"/>
<dbReference type="BindingDB" id="P54819"/>
<dbReference type="ChEMBL" id="CHEMBL4938"/>
<dbReference type="DrugBank" id="DB00718">
    <property type="generic name" value="Adefovir dipivoxil"/>
</dbReference>
<dbReference type="DrugBank" id="DB01717">
    <property type="generic name" value="Bis(Adenosine)-5'-Pentaphosphate"/>
</dbReference>
<dbReference type="DrugBank" id="DB03366">
    <property type="generic name" value="Imidazole"/>
</dbReference>
<dbReference type="DrugBank" id="DB14126">
    <property type="generic name" value="Tenofovir"/>
</dbReference>
<dbReference type="DrugBank" id="DB09299">
    <property type="generic name" value="Tenofovir alafenamide"/>
</dbReference>
<dbReference type="DrugBank" id="DB00300">
    <property type="generic name" value="Tenofovir disoproxil"/>
</dbReference>
<dbReference type="GlyGen" id="P54819">
    <property type="glycosylation" value="1 site, 1 O-linked glycan (1 site)"/>
</dbReference>
<dbReference type="iPTMnet" id="P54819"/>
<dbReference type="MetOSite" id="P54819"/>
<dbReference type="PhosphoSitePlus" id="P54819"/>
<dbReference type="SwissPalm" id="P54819"/>
<dbReference type="BioMuta" id="AK2"/>
<dbReference type="DMDM" id="1708596"/>
<dbReference type="OGP" id="P54819"/>
<dbReference type="REPRODUCTION-2DPAGE" id="IPI00218988"/>
<dbReference type="jPOST" id="P54819"/>
<dbReference type="MassIVE" id="P54819"/>
<dbReference type="PaxDb" id="9606-ENSP00000346921"/>
<dbReference type="PeptideAtlas" id="P54819"/>
<dbReference type="ProteomicsDB" id="56726">
    <molecule id="P54819-1"/>
</dbReference>
<dbReference type="ProteomicsDB" id="56727">
    <molecule id="P54819-2"/>
</dbReference>
<dbReference type="ProteomicsDB" id="56728">
    <molecule id="P54819-3"/>
</dbReference>
<dbReference type="ProteomicsDB" id="56729">
    <molecule id="P54819-4"/>
</dbReference>
<dbReference type="ProteomicsDB" id="56730">
    <molecule id="P54819-5"/>
</dbReference>
<dbReference type="ProteomicsDB" id="56731">
    <molecule id="P54819-6"/>
</dbReference>
<dbReference type="Pumba" id="P54819"/>
<dbReference type="Antibodypedia" id="17047">
    <property type="antibodies" value="455 antibodies from 33 providers"/>
</dbReference>
<dbReference type="DNASU" id="204"/>
<dbReference type="Ensembl" id="ENST00000373449.7">
    <molecule id="P54819-2"/>
    <property type="protein sequence ID" value="ENSP00000362548.2"/>
    <property type="gene ID" value="ENSG00000004455.18"/>
</dbReference>
<dbReference type="Ensembl" id="ENST00000672715.1">
    <molecule id="P54819-1"/>
    <property type="protein sequence ID" value="ENSP00000499935.1"/>
    <property type="gene ID" value="ENSG00000004455.18"/>
</dbReference>
<dbReference type="GeneID" id="204"/>
<dbReference type="KEGG" id="hsa:204"/>
<dbReference type="MANE-Select" id="ENST00000672715.1">
    <property type="protein sequence ID" value="ENSP00000499935.1"/>
    <property type="RefSeq nucleotide sequence ID" value="NM_001625.4"/>
    <property type="RefSeq protein sequence ID" value="NP_001616.1"/>
</dbReference>
<dbReference type="UCSC" id="uc001bwo.3">
    <molecule id="P54819-1"/>
    <property type="organism name" value="human"/>
</dbReference>
<dbReference type="AGR" id="HGNC:362"/>
<dbReference type="CTD" id="204"/>
<dbReference type="DisGeNET" id="204"/>
<dbReference type="GeneCards" id="AK2"/>
<dbReference type="HGNC" id="HGNC:362">
    <property type="gene designation" value="AK2"/>
</dbReference>
<dbReference type="HPA" id="ENSG00000004455">
    <property type="expression patterns" value="Low tissue specificity"/>
</dbReference>
<dbReference type="MalaCards" id="AK2"/>
<dbReference type="MIM" id="103020">
    <property type="type" value="gene"/>
</dbReference>
<dbReference type="MIM" id="267500">
    <property type="type" value="phenotype"/>
</dbReference>
<dbReference type="neXtProt" id="NX_P54819"/>
<dbReference type="OpenTargets" id="ENSG00000004455"/>
<dbReference type="Orphanet" id="33355">
    <property type="disease" value="Reticular dysgenesis"/>
</dbReference>
<dbReference type="PharmGKB" id="PA24656"/>
<dbReference type="VEuPathDB" id="HostDB:ENSG00000004455"/>
<dbReference type="eggNOG" id="KOG3078">
    <property type="taxonomic scope" value="Eukaryota"/>
</dbReference>
<dbReference type="GeneTree" id="ENSGT00940000154576"/>
<dbReference type="InParanoid" id="P54819"/>
<dbReference type="OMA" id="VYHEQTA"/>
<dbReference type="OrthoDB" id="439792at2759"/>
<dbReference type="PAN-GO" id="P54819">
    <property type="GO annotations" value="3 GO annotations based on evolutionary models"/>
</dbReference>
<dbReference type="PhylomeDB" id="P54819"/>
<dbReference type="TreeFam" id="TF300896"/>
<dbReference type="BRENDA" id="2.7.4.3">
    <property type="organism ID" value="2681"/>
</dbReference>
<dbReference type="PathwayCommons" id="P54819"/>
<dbReference type="Reactome" id="R-HSA-499943">
    <property type="pathway name" value="Interconversion of nucleotide di- and triphosphates"/>
</dbReference>
<dbReference type="SignaLink" id="P54819"/>
<dbReference type="BioGRID-ORCS" id="204">
    <property type="hits" value="102 hits in 1154 CRISPR screens"/>
</dbReference>
<dbReference type="CD-CODE" id="91857CE7">
    <property type="entry name" value="Nucleolus"/>
</dbReference>
<dbReference type="ChiTaRS" id="AK2">
    <property type="organism name" value="human"/>
</dbReference>
<dbReference type="EvolutionaryTrace" id="P54819"/>
<dbReference type="GeneWiki" id="AK2"/>
<dbReference type="GenomeRNAi" id="204"/>
<dbReference type="Pharos" id="P54819">
    <property type="development level" value="Tbio"/>
</dbReference>
<dbReference type="PRO" id="PR:P54819"/>
<dbReference type="Proteomes" id="UP000005640">
    <property type="component" value="Chromosome 1"/>
</dbReference>
<dbReference type="RNAct" id="P54819">
    <property type="molecule type" value="protein"/>
</dbReference>
<dbReference type="Bgee" id="ENSG00000004455">
    <property type="expression patterns" value="Expressed in rectum and 187 other cell types or tissues"/>
</dbReference>
<dbReference type="ExpressionAtlas" id="P54819">
    <property type="expression patterns" value="baseline and differential"/>
</dbReference>
<dbReference type="GO" id="GO:0005737">
    <property type="term" value="C:cytoplasm"/>
    <property type="evidence" value="ECO:0000318"/>
    <property type="project" value="GO_Central"/>
</dbReference>
<dbReference type="GO" id="GO:0070062">
    <property type="term" value="C:extracellular exosome"/>
    <property type="evidence" value="ECO:0007005"/>
    <property type="project" value="UniProtKB"/>
</dbReference>
<dbReference type="GO" id="GO:0005758">
    <property type="term" value="C:mitochondrial intermembrane space"/>
    <property type="evidence" value="ECO:0000304"/>
    <property type="project" value="Reactome"/>
</dbReference>
<dbReference type="GO" id="GO:0005739">
    <property type="term" value="C:mitochondrion"/>
    <property type="evidence" value="ECO:0006056"/>
    <property type="project" value="FlyBase"/>
</dbReference>
<dbReference type="GO" id="GO:0097226">
    <property type="term" value="C:sperm mitochondrial sheath"/>
    <property type="evidence" value="ECO:0007669"/>
    <property type="project" value="Ensembl"/>
</dbReference>
<dbReference type="GO" id="GO:0004017">
    <property type="term" value="F:adenylate kinase activity"/>
    <property type="evidence" value="ECO:0000269"/>
    <property type="project" value="Reactome"/>
</dbReference>
<dbReference type="GO" id="GO:0005524">
    <property type="term" value="F:ATP binding"/>
    <property type="evidence" value="ECO:0007669"/>
    <property type="project" value="UniProtKB-KW"/>
</dbReference>
<dbReference type="GO" id="GO:0006172">
    <property type="term" value="P:ADP biosynthetic process"/>
    <property type="evidence" value="ECO:0000318"/>
    <property type="project" value="GO_Central"/>
</dbReference>
<dbReference type="GO" id="GO:0046033">
    <property type="term" value="P:AMP metabolic process"/>
    <property type="evidence" value="ECO:0007669"/>
    <property type="project" value="UniProtKB-UniRule"/>
</dbReference>
<dbReference type="GO" id="GO:0046034">
    <property type="term" value="P:ATP metabolic process"/>
    <property type="evidence" value="ECO:0007669"/>
    <property type="project" value="UniProtKB-UniRule"/>
</dbReference>
<dbReference type="GO" id="GO:0015949">
    <property type="term" value="P:nucleobase-containing small molecule interconversion"/>
    <property type="evidence" value="ECO:0000304"/>
    <property type="project" value="Reactome"/>
</dbReference>
<dbReference type="CDD" id="cd01428">
    <property type="entry name" value="ADK"/>
    <property type="match status" value="1"/>
</dbReference>
<dbReference type="FunFam" id="3.40.50.300:FF:000106">
    <property type="entry name" value="Adenylate kinase mitochondrial"/>
    <property type="match status" value="1"/>
</dbReference>
<dbReference type="Gene3D" id="3.40.50.300">
    <property type="entry name" value="P-loop containing nucleotide triphosphate hydrolases"/>
    <property type="match status" value="1"/>
</dbReference>
<dbReference type="HAMAP" id="MF_00235">
    <property type="entry name" value="Adenylate_kinase_Adk"/>
    <property type="match status" value="1"/>
</dbReference>
<dbReference type="HAMAP" id="MF_03168">
    <property type="entry name" value="Adenylate_kinase_AK2"/>
    <property type="match status" value="1"/>
</dbReference>
<dbReference type="InterPro" id="IPR006259">
    <property type="entry name" value="Adenyl_kin_sub"/>
</dbReference>
<dbReference type="InterPro" id="IPR000850">
    <property type="entry name" value="Adenylat/UMP-CMP_kin"/>
</dbReference>
<dbReference type="InterPro" id="IPR033690">
    <property type="entry name" value="Adenylat_kinase_CS"/>
</dbReference>
<dbReference type="InterPro" id="IPR007862">
    <property type="entry name" value="Adenylate_kinase_lid-dom"/>
</dbReference>
<dbReference type="InterPro" id="IPR028587">
    <property type="entry name" value="AK2"/>
</dbReference>
<dbReference type="InterPro" id="IPR027417">
    <property type="entry name" value="P-loop_NTPase"/>
</dbReference>
<dbReference type="NCBIfam" id="TIGR01351">
    <property type="entry name" value="adk"/>
    <property type="match status" value="1"/>
</dbReference>
<dbReference type="NCBIfam" id="NF001381">
    <property type="entry name" value="PRK00279.1-3"/>
    <property type="match status" value="1"/>
</dbReference>
<dbReference type="NCBIfam" id="NF011100">
    <property type="entry name" value="PRK14527.1"/>
    <property type="match status" value="1"/>
</dbReference>
<dbReference type="PANTHER" id="PTHR23359">
    <property type="entry name" value="NUCLEOTIDE KINASE"/>
    <property type="match status" value="1"/>
</dbReference>
<dbReference type="Pfam" id="PF00406">
    <property type="entry name" value="ADK"/>
    <property type="match status" value="1"/>
</dbReference>
<dbReference type="Pfam" id="PF05191">
    <property type="entry name" value="ADK_lid"/>
    <property type="match status" value="1"/>
</dbReference>
<dbReference type="PRINTS" id="PR00094">
    <property type="entry name" value="ADENYLTKNASE"/>
</dbReference>
<dbReference type="SUPFAM" id="SSF52540">
    <property type="entry name" value="P-loop containing nucleoside triphosphate hydrolases"/>
    <property type="match status" value="1"/>
</dbReference>
<dbReference type="PROSITE" id="PS00113">
    <property type="entry name" value="ADENYLATE_KINASE"/>
    <property type="match status" value="1"/>
</dbReference>
<organism>
    <name type="scientific">Homo sapiens</name>
    <name type="common">Human</name>
    <dbReference type="NCBI Taxonomy" id="9606"/>
    <lineage>
        <taxon>Eukaryota</taxon>
        <taxon>Metazoa</taxon>
        <taxon>Chordata</taxon>
        <taxon>Craniata</taxon>
        <taxon>Vertebrata</taxon>
        <taxon>Euteleostomi</taxon>
        <taxon>Mammalia</taxon>
        <taxon>Eutheria</taxon>
        <taxon>Euarchontoglires</taxon>
        <taxon>Primates</taxon>
        <taxon>Haplorrhini</taxon>
        <taxon>Catarrhini</taxon>
        <taxon>Hominidae</taxon>
        <taxon>Homo</taxon>
    </lineage>
</organism>
<keyword id="KW-0002">3D-structure</keyword>
<keyword id="KW-0007">Acetylation</keyword>
<keyword id="KW-0025">Alternative splicing</keyword>
<keyword id="KW-0067">ATP-binding</keyword>
<keyword id="KW-0903">Direct protein sequencing</keyword>
<keyword id="KW-0225">Disease variant</keyword>
<keyword id="KW-1015">Disulfide bond</keyword>
<keyword id="KW-0418">Kinase</keyword>
<keyword id="KW-0496">Mitochondrion</keyword>
<keyword id="KW-0547">Nucleotide-binding</keyword>
<keyword id="KW-0597">Phosphoprotein</keyword>
<keyword id="KW-1267">Proteomics identification</keyword>
<keyword id="KW-1185">Reference proteome</keyword>
<keyword id="KW-0705">SCID</keyword>
<keyword id="KW-0808">Transferase</keyword>
<feature type="chain" id="PRO_0000423212" description="Adenylate kinase 2, mitochondrial">
    <location>
        <begin position="1"/>
        <end position="239"/>
    </location>
</feature>
<feature type="initiator methionine" description="Removed; alternate" evidence="2 6 19">
    <location>
        <position position="1"/>
    </location>
</feature>
<feature type="chain" id="PRO_0000158917" description="Adenylate kinase 2, mitochondrial, N-terminally processed">
    <location>
        <begin position="2"/>
        <end position="239"/>
    </location>
</feature>
<feature type="region of interest" description="NMP" evidence="2 7">
    <location>
        <begin position="45"/>
        <end position="74"/>
    </location>
</feature>
<feature type="region of interest" description="LID" evidence="2 7">
    <location>
        <begin position="141"/>
        <end position="178"/>
    </location>
</feature>
<feature type="region of interest" description="Disordered" evidence="3">
    <location>
        <begin position="150"/>
        <end position="169"/>
    </location>
</feature>
<feature type="compositionally biased region" description="Basic and acidic residues" evidence="3">
    <location>
        <begin position="151"/>
        <end position="169"/>
    </location>
</feature>
<feature type="binding site" evidence="2 7">
    <location>
        <begin position="25"/>
        <end position="30"/>
    </location>
    <ligand>
        <name>ATP</name>
        <dbReference type="ChEBI" id="CHEBI:30616"/>
    </ligand>
</feature>
<feature type="binding site" evidence="2">
    <location>
        <position position="46"/>
    </location>
    <ligand>
        <name>AMP</name>
        <dbReference type="ChEBI" id="CHEBI:456215"/>
    </ligand>
</feature>
<feature type="binding site" evidence="2">
    <location>
        <position position="51"/>
    </location>
    <ligand>
        <name>AMP</name>
        <dbReference type="ChEBI" id="CHEBI:456215"/>
    </ligand>
</feature>
<feature type="binding site" evidence="2">
    <location>
        <begin position="72"/>
        <end position="74"/>
    </location>
    <ligand>
        <name>AMP</name>
        <dbReference type="ChEBI" id="CHEBI:456215"/>
    </ligand>
</feature>
<feature type="binding site" evidence="2">
    <location>
        <begin position="100"/>
        <end position="103"/>
    </location>
    <ligand>
        <name>AMP</name>
        <dbReference type="ChEBI" id="CHEBI:456215"/>
    </ligand>
</feature>
<feature type="binding site" evidence="2">
    <location>
        <position position="107"/>
    </location>
    <ligand>
        <name>AMP</name>
        <dbReference type="ChEBI" id="CHEBI:456215"/>
    </ligand>
</feature>
<feature type="binding site" evidence="7">
    <location>
        <position position="138"/>
    </location>
    <ligand>
        <name>ATP</name>
        <dbReference type="ChEBI" id="CHEBI:30616"/>
    </ligand>
</feature>
<feature type="binding site" evidence="2">
    <location>
        <position position="142"/>
    </location>
    <ligand>
        <name>ATP</name>
        <dbReference type="ChEBI" id="CHEBI:30616"/>
    </ligand>
</feature>
<feature type="binding site" evidence="2 7">
    <location>
        <begin position="151"/>
        <end position="152"/>
    </location>
    <ligand>
        <name>ATP</name>
        <dbReference type="ChEBI" id="CHEBI:30616"/>
    </ligand>
</feature>
<feature type="binding site" evidence="2 7">
    <location>
        <position position="175"/>
    </location>
    <ligand>
        <name>AMP</name>
        <dbReference type="ChEBI" id="CHEBI:456215"/>
    </ligand>
</feature>
<feature type="binding site" evidence="2">
    <location>
        <position position="186"/>
    </location>
    <ligand>
        <name>AMP</name>
        <dbReference type="ChEBI" id="CHEBI:456215"/>
    </ligand>
</feature>
<feature type="binding site" evidence="2 7">
    <location>
        <position position="214"/>
    </location>
    <ligand>
        <name>ATP</name>
        <dbReference type="ChEBI" id="CHEBI:30616"/>
    </ligand>
</feature>
<feature type="modified residue" description="N-acetylmethionine" evidence="15 16 19">
    <location>
        <position position="1"/>
    </location>
</feature>
<feature type="modified residue" description="Phosphoserine" evidence="17">
    <location>
        <position position="4"/>
    </location>
</feature>
<feature type="modified residue" description="Phosphoserine" evidence="17">
    <location>
        <position position="58"/>
    </location>
</feature>
<feature type="modified residue" description="N6-succinyllysine" evidence="1">
    <location>
        <position position="62"/>
    </location>
</feature>
<feature type="modified residue" description="N6-succinyllysine" evidence="1">
    <location>
        <position position="93"/>
    </location>
</feature>
<feature type="modified residue" description="Phosphoserine" evidence="18">
    <location>
        <position position="133"/>
    </location>
</feature>
<feature type="modified residue" description="N6-acetyllysine" evidence="1">
    <location>
        <position position="181"/>
    </location>
</feature>
<feature type="modified residue" description="Phosphothreonine" evidence="17">
    <location>
        <position position="195"/>
    </location>
</feature>
<feature type="disulfide bond" evidence="2 7">
    <location>
        <begin position="42"/>
        <end position="92"/>
    </location>
</feature>
<feature type="splice variant" id="VSP_002792" description="In isoform 4 and isoform 6." evidence="8 13">
    <location>
        <begin position="1"/>
        <end position="48"/>
    </location>
</feature>
<feature type="splice variant" id="VSP_036503" description="In isoform 5." evidence="8">
    <location>
        <begin position="135"/>
        <end position="142"/>
    </location>
</feature>
<feature type="splice variant" id="VSP_002793" description="In isoform 4." evidence="13">
    <original>DD</original>
    <variation>GL</variation>
    <location>
        <begin position="177"/>
        <end position="178"/>
    </location>
</feature>
<feature type="splice variant" id="VSP_002791" description="In isoform 3." evidence="13">
    <original>DNEKALKIRLQAYHTQTTPLIEYYRKRGIHSAIDASQTPDVVFASILAAFSKATCKDLVMFI</original>
    <variation>IGQAKRSFLRLAKISFDVLIKKALA</variation>
    <location>
        <begin position="178"/>
        <end position="239"/>
    </location>
</feature>
<feature type="splice variant" id="VSP_002794" description="In isoform 4." evidence="13">
    <location>
        <begin position="179"/>
        <end position="239"/>
    </location>
</feature>
<feature type="splice variant" id="VSP_002790" description="In isoform 2 and isoform 5." evidence="8 9 10 11 12">
    <original>CKDLVMFI</original>
    <variation>S</variation>
    <location>
        <begin position="232"/>
        <end position="239"/>
    </location>
</feature>
<feature type="sequence variant" id="VAR_054630" description="In RDYS; dbSNP:rs267606648." evidence="4">
    <original>R</original>
    <variation>W</variation>
    <location>
        <position position="103"/>
    </location>
</feature>
<feature type="sequence variant" id="VAR_054631" description="In RDYS; dbSNP:rs267606643." evidence="4">
    <original>D</original>
    <variation>G</variation>
    <location>
        <position position="165"/>
    </location>
</feature>
<feature type="sequence variant" id="VAR_050032" description="In dbSNP:rs12116440.">
    <original>A</original>
    <variation>T</variation>
    <location>
        <position position="209"/>
    </location>
</feature>
<feature type="strand" evidence="20">
    <location>
        <begin position="16"/>
        <end position="21"/>
    </location>
</feature>
<feature type="helix" evidence="20">
    <location>
        <begin position="28"/>
        <end position="39"/>
    </location>
</feature>
<feature type="strand" evidence="20">
    <location>
        <begin position="42"/>
        <end position="45"/>
    </location>
</feature>
<feature type="helix" evidence="20">
    <location>
        <begin position="46"/>
        <end position="56"/>
    </location>
</feature>
<feature type="helix" evidence="20">
    <location>
        <begin position="59"/>
        <end position="69"/>
    </location>
</feature>
<feature type="helix" evidence="20">
    <location>
        <begin position="76"/>
        <end position="87"/>
    </location>
</feature>
<feature type="helix" evidence="20">
    <location>
        <begin position="90"/>
        <end position="92"/>
    </location>
</feature>
<feature type="strand" evidence="20">
    <location>
        <begin position="95"/>
        <end position="100"/>
    </location>
</feature>
<feature type="helix" evidence="20">
    <location>
        <begin position="105"/>
        <end position="117"/>
    </location>
</feature>
<feature type="strand" evidence="20">
    <location>
        <begin position="124"/>
        <end position="129"/>
    </location>
</feature>
<feature type="helix" evidence="20">
    <location>
        <begin position="132"/>
        <end position="140"/>
    </location>
</feature>
<feature type="turn" evidence="20">
    <location>
        <begin position="146"/>
        <end position="148"/>
    </location>
</feature>
<feature type="strand" evidence="20">
    <location>
        <begin position="151"/>
        <end position="153"/>
    </location>
</feature>
<feature type="turn" evidence="20">
    <location>
        <begin position="154"/>
        <end position="156"/>
    </location>
</feature>
<feature type="strand" evidence="20">
    <location>
        <begin position="166"/>
        <end position="168"/>
    </location>
</feature>
<feature type="helix" evidence="20">
    <location>
        <begin position="180"/>
        <end position="203"/>
    </location>
</feature>
<feature type="strand" evidence="20">
    <location>
        <begin position="207"/>
        <end position="211"/>
    </location>
</feature>
<feature type="helix" evidence="20">
    <location>
        <begin position="216"/>
        <end position="230"/>
    </location>
</feature>
<evidence type="ECO:0000250" key="1">
    <source>
        <dbReference type="UniProtKB" id="Q9WTP6"/>
    </source>
</evidence>
<evidence type="ECO:0000255" key="2">
    <source>
        <dbReference type="HAMAP-Rule" id="MF_03168"/>
    </source>
</evidence>
<evidence type="ECO:0000256" key="3">
    <source>
        <dbReference type="SAM" id="MobiDB-lite"/>
    </source>
</evidence>
<evidence type="ECO:0000269" key="4">
    <source>
    </source>
</evidence>
<evidence type="ECO:0000269" key="5">
    <source>
    </source>
</evidence>
<evidence type="ECO:0000269" key="6">
    <source ref="10"/>
</evidence>
<evidence type="ECO:0000269" key="7">
    <source ref="17"/>
</evidence>
<evidence type="ECO:0000303" key="8">
    <source>
    </source>
</evidence>
<evidence type="ECO:0000303" key="9">
    <source>
    </source>
</evidence>
<evidence type="ECO:0000303" key="10">
    <source>
    </source>
</evidence>
<evidence type="ECO:0000303" key="11">
    <source>
    </source>
</evidence>
<evidence type="ECO:0000303" key="12">
    <source>
    </source>
</evidence>
<evidence type="ECO:0000303" key="13">
    <source ref="4"/>
</evidence>
<evidence type="ECO:0000305" key="14">
    <source ref="17"/>
</evidence>
<evidence type="ECO:0007744" key="15">
    <source>
    </source>
</evidence>
<evidence type="ECO:0007744" key="16">
    <source>
    </source>
</evidence>
<evidence type="ECO:0007744" key="17">
    <source>
    </source>
</evidence>
<evidence type="ECO:0007744" key="18">
    <source>
    </source>
</evidence>
<evidence type="ECO:0007744" key="19">
    <source>
    </source>
</evidence>
<evidence type="ECO:0007829" key="20">
    <source>
        <dbReference type="PDB" id="2C9Y"/>
    </source>
</evidence>
<reference key="1">
    <citation type="journal article" date="1996" name="Biochem. Mol. Biol. Int.">
        <title>Cloning and characterization of cDNA for human adenylate kinase 2A.</title>
        <authorList>
            <person name="Lee Y."/>
            <person name="Kim J.W."/>
            <person name="Lee I.A."/>
            <person name="Kang H.B."/>
            <person name="Choe Y.K."/>
            <person name="Lee H.G."/>
            <person name="Lim J.S."/>
            <person name="Kim H.J."/>
            <person name="Park C."/>
            <person name="Choe I.S."/>
        </authorList>
    </citation>
    <scope>NUCLEOTIDE SEQUENCE [MRNA] (ISOFORM 1)</scope>
    <source>
        <tissue>Liver</tissue>
    </source>
</reference>
<reference key="2">
    <citation type="journal article" date="1998" name="J. Biochem.">
        <title>Cloning and expression of human adenylate kinase 2 isozymes: differential expression of adenylate kinase 1 and 2 in human muscle tissues.</title>
        <authorList>
            <person name="Lee Y."/>
            <person name="Kim J.W."/>
            <person name="Lee S.M."/>
            <person name="Kim H.J."/>
            <person name="Lee K.S."/>
            <person name="Park C."/>
            <person name="Choe I.S."/>
        </authorList>
    </citation>
    <scope>NUCLEOTIDE SEQUENCE [MRNA] (ISOFORM 2)</scope>
    <source>
        <tissue>Fetal liver</tissue>
    </source>
</reference>
<reference key="3">
    <citation type="journal article" date="1998" name="Biochim. Biophys. Acta">
        <title>cDNA cloning and tissue-specific expression of the gene encoding human adenylate kinase isozyme 2.</title>
        <authorList>
            <person name="Noma T."/>
            <person name="Song S."/>
            <person name="Yoon Y.-S."/>
            <person name="Tanaka S."/>
            <person name="Nakazawa A."/>
        </authorList>
    </citation>
    <scope>NUCLEOTIDE SEQUENCE [MRNA] (ISOFORMS 1 AND 2)</scope>
</reference>
<reference key="4">
    <citation type="submission" date="2002-02" db="EMBL/GenBank/DDBJ databases">
        <title>Novel isoforms of human adenylate kinase 2.</title>
        <authorList>
            <person name="Guo J."/>
        </authorList>
    </citation>
    <scope>NUCLEOTIDE SEQUENCE [MRNA] (ISOFORMS 3 AND 4)</scope>
</reference>
<reference key="5">
    <citation type="journal article" date="2004" name="Nat. Genet.">
        <title>Complete sequencing and characterization of 21,243 full-length human cDNAs.</title>
        <authorList>
            <person name="Ota T."/>
            <person name="Suzuki Y."/>
            <person name="Nishikawa T."/>
            <person name="Otsuki T."/>
            <person name="Sugiyama T."/>
            <person name="Irie R."/>
            <person name="Wakamatsu A."/>
            <person name="Hayashi K."/>
            <person name="Sato H."/>
            <person name="Nagai K."/>
            <person name="Kimura K."/>
            <person name="Makita H."/>
            <person name="Sekine M."/>
            <person name="Obayashi M."/>
            <person name="Nishi T."/>
            <person name="Shibahara T."/>
            <person name="Tanaka T."/>
            <person name="Ishii S."/>
            <person name="Yamamoto J."/>
            <person name="Saito K."/>
            <person name="Kawai Y."/>
            <person name="Isono Y."/>
            <person name="Nakamura Y."/>
            <person name="Nagahari K."/>
            <person name="Murakami K."/>
            <person name="Yasuda T."/>
            <person name="Iwayanagi T."/>
            <person name="Wagatsuma M."/>
            <person name="Shiratori A."/>
            <person name="Sudo H."/>
            <person name="Hosoiri T."/>
            <person name="Kaku Y."/>
            <person name="Kodaira H."/>
            <person name="Kondo H."/>
            <person name="Sugawara M."/>
            <person name="Takahashi M."/>
            <person name="Kanda K."/>
            <person name="Yokoi T."/>
            <person name="Furuya T."/>
            <person name="Kikkawa E."/>
            <person name="Omura Y."/>
            <person name="Abe K."/>
            <person name="Kamihara K."/>
            <person name="Katsuta N."/>
            <person name="Sato K."/>
            <person name="Tanikawa M."/>
            <person name="Yamazaki M."/>
            <person name="Ninomiya K."/>
            <person name="Ishibashi T."/>
            <person name="Yamashita H."/>
            <person name="Murakawa K."/>
            <person name="Fujimori K."/>
            <person name="Tanai H."/>
            <person name="Kimata M."/>
            <person name="Watanabe M."/>
            <person name="Hiraoka S."/>
            <person name="Chiba Y."/>
            <person name="Ishida S."/>
            <person name="Ono Y."/>
            <person name="Takiguchi S."/>
            <person name="Watanabe S."/>
            <person name="Yosida M."/>
            <person name="Hotuta T."/>
            <person name="Kusano J."/>
            <person name="Kanehori K."/>
            <person name="Takahashi-Fujii A."/>
            <person name="Hara H."/>
            <person name="Tanase T.-O."/>
            <person name="Nomura Y."/>
            <person name="Togiya S."/>
            <person name="Komai F."/>
            <person name="Hara R."/>
            <person name="Takeuchi K."/>
            <person name="Arita M."/>
            <person name="Imose N."/>
            <person name="Musashino K."/>
            <person name="Yuuki H."/>
            <person name="Oshima A."/>
            <person name="Sasaki N."/>
            <person name="Aotsuka S."/>
            <person name="Yoshikawa Y."/>
            <person name="Matsunawa H."/>
            <person name="Ichihara T."/>
            <person name="Shiohata N."/>
            <person name="Sano S."/>
            <person name="Moriya S."/>
            <person name="Momiyama H."/>
            <person name="Satoh N."/>
            <person name="Takami S."/>
            <person name="Terashima Y."/>
            <person name="Suzuki O."/>
            <person name="Nakagawa S."/>
            <person name="Senoh A."/>
            <person name="Mizoguchi H."/>
            <person name="Goto Y."/>
            <person name="Shimizu F."/>
            <person name="Wakebe H."/>
            <person name="Hishigaki H."/>
            <person name="Watanabe T."/>
            <person name="Sugiyama A."/>
            <person name="Takemoto M."/>
            <person name="Kawakami B."/>
            <person name="Yamazaki M."/>
            <person name="Watanabe K."/>
            <person name="Kumagai A."/>
            <person name="Itakura S."/>
            <person name="Fukuzumi Y."/>
            <person name="Fujimori Y."/>
            <person name="Komiyama M."/>
            <person name="Tashiro H."/>
            <person name="Tanigami A."/>
            <person name="Fujiwara T."/>
            <person name="Ono T."/>
            <person name="Yamada K."/>
            <person name="Fujii Y."/>
            <person name="Ozaki K."/>
            <person name="Hirao M."/>
            <person name="Ohmori Y."/>
            <person name="Kawabata A."/>
            <person name="Hikiji T."/>
            <person name="Kobatake N."/>
            <person name="Inagaki H."/>
            <person name="Ikema Y."/>
            <person name="Okamoto S."/>
            <person name="Okitani R."/>
            <person name="Kawakami T."/>
            <person name="Noguchi S."/>
            <person name="Itoh T."/>
            <person name="Shigeta K."/>
            <person name="Senba T."/>
            <person name="Matsumura K."/>
            <person name="Nakajima Y."/>
            <person name="Mizuno T."/>
            <person name="Morinaga M."/>
            <person name="Sasaki M."/>
            <person name="Togashi T."/>
            <person name="Oyama M."/>
            <person name="Hata H."/>
            <person name="Watanabe M."/>
            <person name="Komatsu T."/>
            <person name="Mizushima-Sugano J."/>
            <person name="Satoh T."/>
            <person name="Shirai Y."/>
            <person name="Takahashi Y."/>
            <person name="Nakagawa K."/>
            <person name="Okumura K."/>
            <person name="Nagase T."/>
            <person name="Nomura N."/>
            <person name="Kikuchi H."/>
            <person name="Masuho Y."/>
            <person name="Yamashita R."/>
            <person name="Nakai K."/>
            <person name="Yada T."/>
            <person name="Nakamura Y."/>
            <person name="Ohara O."/>
            <person name="Isogai T."/>
            <person name="Sugano S."/>
        </authorList>
    </citation>
    <scope>NUCLEOTIDE SEQUENCE [LARGE SCALE MRNA] (ISOFORMS 1; 5 AND 6)</scope>
    <source>
        <tissue>Brain</tissue>
        <tissue>Placenta</tissue>
        <tissue>Tongue</tissue>
    </source>
</reference>
<reference key="6">
    <citation type="journal article" date="2008" name="Nat. Methods">
        <title>Human protein factory for converting the transcriptome into an in vitro-expressed proteome.</title>
        <authorList>
            <person name="Goshima N."/>
            <person name="Kawamura Y."/>
            <person name="Fukumoto A."/>
            <person name="Miura A."/>
            <person name="Honma R."/>
            <person name="Satoh R."/>
            <person name="Wakamatsu A."/>
            <person name="Yamamoto J."/>
            <person name="Kimura K."/>
            <person name="Nishikawa T."/>
            <person name="Andoh T."/>
            <person name="Iida Y."/>
            <person name="Ishikawa K."/>
            <person name="Ito E."/>
            <person name="Kagawa N."/>
            <person name="Kaminaga C."/>
            <person name="Kanehori K."/>
            <person name="Kawakami B."/>
            <person name="Kenmochi K."/>
            <person name="Kimura R."/>
            <person name="Kobayashi M."/>
            <person name="Kuroita T."/>
            <person name="Kuwayama H."/>
            <person name="Maruyama Y."/>
            <person name="Matsuo K."/>
            <person name="Minami K."/>
            <person name="Mitsubori M."/>
            <person name="Mori M."/>
            <person name="Morishita R."/>
            <person name="Murase A."/>
            <person name="Nishikawa A."/>
            <person name="Nishikawa S."/>
            <person name="Okamoto T."/>
            <person name="Sakagami N."/>
            <person name="Sakamoto Y."/>
            <person name="Sasaki Y."/>
            <person name="Seki T."/>
            <person name="Sono S."/>
            <person name="Sugiyama A."/>
            <person name="Sumiya T."/>
            <person name="Takayama T."/>
            <person name="Takayama Y."/>
            <person name="Takeda H."/>
            <person name="Togashi T."/>
            <person name="Yahata K."/>
            <person name="Yamada H."/>
            <person name="Yanagisawa Y."/>
            <person name="Endo Y."/>
            <person name="Imamoto F."/>
            <person name="Kisu Y."/>
            <person name="Tanaka S."/>
            <person name="Isogai T."/>
            <person name="Imai J."/>
            <person name="Watanabe S."/>
            <person name="Nomura N."/>
        </authorList>
    </citation>
    <scope>NUCLEOTIDE SEQUENCE [LARGE SCALE MRNA] (ISOFORM 2)</scope>
</reference>
<reference key="7">
    <citation type="journal article" date="2006" name="Nature">
        <title>The DNA sequence and biological annotation of human chromosome 1.</title>
        <authorList>
            <person name="Gregory S.G."/>
            <person name="Barlow K.F."/>
            <person name="McLay K.E."/>
            <person name="Kaul R."/>
            <person name="Swarbreck D."/>
            <person name="Dunham A."/>
            <person name="Scott C.E."/>
            <person name="Howe K.L."/>
            <person name="Woodfine K."/>
            <person name="Spencer C.C.A."/>
            <person name="Jones M.C."/>
            <person name="Gillson C."/>
            <person name="Searle S."/>
            <person name="Zhou Y."/>
            <person name="Kokocinski F."/>
            <person name="McDonald L."/>
            <person name="Evans R."/>
            <person name="Phillips K."/>
            <person name="Atkinson A."/>
            <person name="Cooper R."/>
            <person name="Jones C."/>
            <person name="Hall R.E."/>
            <person name="Andrews T.D."/>
            <person name="Lloyd C."/>
            <person name="Ainscough R."/>
            <person name="Almeida J.P."/>
            <person name="Ambrose K.D."/>
            <person name="Anderson F."/>
            <person name="Andrew R.W."/>
            <person name="Ashwell R.I.S."/>
            <person name="Aubin K."/>
            <person name="Babbage A.K."/>
            <person name="Bagguley C.L."/>
            <person name="Bailey J."/>
            <person name="Beasley H."/>
            <person name="Bethel G."/>
            <person name="Bird C.P."/>
            <person name="Bray-Allen S."/>
            <person name="Brown J.Y."/>
            <person name="Brown A.J."/>
            <person name="Buckley D."/>
            <person name="Burton J."/>
            <person name="Bye J."/>
            <person name="Carder C."/>
            <person name="Chapman J.C."/>
            <person name="Clark S.Y."/>
            <person name="Clarke G."/>
            <person name="Clee C."/>
            <person name="Cobley V."/>
            <person name="Collier R.E."/>
            <person name="Corby N."/>
            <person name="Coville G.J."/>
            <person name="Davies J."/>
            <person name="Deadman R."/>
            <person name="Dunn M."/>
            <person name="Earthrowl M."/>
            <person name="Ellington A.G."/>
            <person name="Errington H."/>
            <person name="Frankish A."/>
            <person name="Frankland J."/>
            <person name="French L."/>
            <person name="Garner P."/>
            <person name="Garnett J."/>
            <person name="Gay L."/>
            <person name="Ghori M.R.J."/>
            <person name="Gibson R."/>
            <person name="Gilby L.M."/>
            <person name="Gillett W."/>
            <person name="Glithero R.J."/>
            <person name="Grafham D.V."/>
            <person name="Griffiths C."/>
            <person name="Griffiths-Jones S."/>
            <person name="Grocock R."/>
            <person name="Hammond S."/>
            <person name="Harrison E.S.I."/>
            <person name="Hart E."/>
            <person name="Haugen E."/>
            <person name="Heath P.D."/>
            <person name="Holmes S."/>
            <person name="Holt K."/>
            <person name="Howden P.J."/>
            <person name="Hunt A.R."/>
            <person name="Hunt S.E."/>
            <person name="Hunter G."/>
            <person name="Isherwood J."/>
            <person name="James R."/>
            <person name="Johnson C."/>
            <person name="Johnson D."/>
            <person name="Joy A."/>
            <person name="Kay M."/>
            <person name="Kershaw J.K."/>
            <person name="Kibukawa M."/>
            <person name="Kimberley A.M."/>
            <person name="King A."/>
            <person name="Knights A.J."/>
            <person name="Lad H."/>
            <person name="Laird G."/>
            <person name="Lawlor S."/>
            <person name="Leongamornlert D.A."/>
            <person name="Lloyd D.M."/>
            <person name="Loveland J."/>
            <person name="Lovell J."/>
            <person name="Lush M.J."/>
            <person name="Lyne R."/>
            <person name="Martin S."/>
            <person name="Mashreghi-Mohammadi M."/>
            <person name="Matthews L."/>
            <person name="Matthews N.S.W."/>
            <person name="McLaren S."/>
            <person name="Milne S."/>
            <person name="Mistry S."/>
            <person name="Moore M.J.F."/>
            <person name="Nickerson T."/>
            <person name="O'Dell C.N."/>
            <person name="Oliver K."/>
            <person name="Palmeiri A."/>
            <person name="Palmer S.A."/>
            <person name="Parker A."/>
            <person name="Patel D."/>
            <person name="Pearce A.V."/>
            <person name="Peck A.I."/>
            <person name="Pelan S."/>
            <person name="Phelps K."/>
            <person name="Phillimore B.J."/>
            <person name="Plumb R."/>
            <person name="Rajan J."/>
            <person name="Raymond C."/>
            <person name="Rouse G."/>
            <person name="Saenphimmachak C."/>
            <person name="Sehra H.K."/>
            <person name="Sheridan E."/>
            <person name="Shownkeen R."/>
            <person name="Sims S."/>
            <person name="Skuce C.D."/>
            <person name="Smith M."/>
            <person name="Steward C."/>
            <person name="Subramanian S."/>
            <person name="Sycamore N."/>
            <person name="Tracey A."/>
            <person name="Tromans A."/>
            <person name="Van Helmond Z."/>
            <person name="Wall M."/>
            <person name="Wallis J.M."/>
            <person name="White S."/>
            <person name="Whitehead S.L."/>
            <person name="Wilkinson J.E."/>
            <person name="Willey D.L."/>
            <person name="Williams H."/>
            <person name="Wilming L."/>
            <person name="Wray P.W."/>
            <person name="Wu Z."/>
            <person name="Coulson A."/>
            <person name="Vaudin M."/>
            <person name="Sulston J.E."/>
            <person name="Durbin R.M."/>
            <person name="Hubbard T."/>
            <person name="Wooster R."/>
            <person name="Dunham I."/>
            <person name="Carter N.P."/>
            <person name="McVean G."/>
            <person name="Ross M.T."/>
            <person name="Harrow J."/>
            <person name="Olson M.V."/>
            <person name="Beck S."/>
            <person name="Rogers J."/>
            <person name="Bentley D.R."/>
        </authorList>
    </citation>
    <scope>NUCLEOTIDE SEQUENCE [LARGE SCALE GENOMIC DNA]</scope>
</reference>
<reference key="8">
    <citation type="submission" date="2005-09" db="EMBL/GenBank/DDBJ databases">
        <authorList>
            <person name="Mural R.J."/>
            <person name="Istrail S."/>
            <person name="Sutton G.G."/>
            <person name="Florea L."/>
            <person name="Halpern A.L."/>
            <person name="Mobarry C.M."/>
            <person name="Lippert R."/>
            <person name="Walenz B."/>
            <person name="Shatkay H."/>
            <person name="Dew I."/>
            <person name="Miller J.R."/>
            <person name="Flanigan M.J."/>
            <person name="Edwards N.J."/>
            <person name="Bolanos R."/>
            <person name="Fasulo D."/>
            <person name="Halldorsson B.V."/>
            <person name="Hannenhalli S."/>
            <person name="Turner R."/>
            <person name="Yooseph S."/>
            <person name="Lu F."/>
            <person name="Nusskern D.R."/>
            <person name="Shue B.C."/>
            <person name="Zheng X.H."/>
            <person name="Zhong F."/>
            <person name="Delcher A.L."/>
            <person name="Huson D.H."/>
            <person name="Kravitz S.A."/>
            <person name="Mouchard L."/>
            <person name="Reinert K."/>
            <person name="Remington K.A."/>
            <person name="Clark A.G."/>
            <person name="Waterman M.S."/>
            <person name="Eichler E.E."/>
            <person name="Adams M.D."/>
            <person name="Hunkapiller M.W."/>
            <person name="Myers E.W."/>
            <person name="Venter J.C."/>
        </authorList>
    </citation>
    <scope>NUCLEOTIDE SEQUENCE [LARGE SCALE GENOMIC DNA]</scope>
</reference>
<reference key="9">
    <citation type="journal article" date="2004" name="Genome Res.">
        <title>The status, quality, and expansion of the NIH full-length cDNA project: the Mammalian Gene Collection (MGC).</title>
        <authorList>
            <consortium name="The MGC Project Team"/>
        </authorList>
    </citation>
    <scope>NUCLEOTIDE SEQUENCE [LARGE SCALE MRNA] (ISOFORMS 1 AND 2)</scope>
    <source>
        <tissue>Placenta</tissue>
        <tissue>Uterus</tissue>
    </source>
</reference>
<reference key="10">
    <citation type="submission" date="2008-03" db="UniProtKB">
        <authorList>
            <person name="Bienvenut W.V."/>
            <person name="Heiserich L."/>
            <person name="Gottlieb E."/>
        </authorList>
    </citation>
    <scope>PROTEIN SEQUENCE OF 2-14; 18-34; 73-85; 94-103; 107-117 AND 120-138</scope>
    <scope>CLEAVAGE OF INITIATOR METHIONINE</scope>
    <scope>IDENTIFICATION BY MASS SPECTROMETRY</scope>
    <source>
        <tissue>Colon carcinoma</tissue>
    </source>
</reference>
<reference key="11">
    <citation type="journal article" date="2009" name="Anal. Chem.">
        <title>Lys-N and trypsin cover complementary parts of the phosphoproteome in a refined SCX-based approach.</title>
        <authorList>
            <person name="Gauci S."/>
            <person name="Helbig A.O."/>
            <person name="Slijper M."/>
            <person name="Krijgsveld J."/>
            <person name="Heck A.J."/>
            <person name="Mohammed S."/>
        </authorList>
    </citation>
    <scope>ACETYLATION [LARGE SCALE ANALYSIS] AT MET-1</scope>
    <scope>IDENTIFICATION BY MASS SPECTROMETRY [LARGE SCALE ANALYSIS]</scope>
</reference>
<reference key="12">
    <citation type="journal article" date="2011" name="BMC Syst. Biol.">
        <title>Initial characterization of the human central proteome.</title>
        <authorList>
            <person name="Burkard T.R."/>
            <person name="Planyavsky M."/>
            <person name="Kaupe I."/>
            <person name="Breitwieser F.P."/>
            <person name="Buerckstuemmer T."/>
            <person name="Bennett K.L."/>
            <person name="Superti-Furga G."/>
            <person name="Colinge J."/>
        </authorList>
    </citation>
    <scope>IDENTIFICATION BY MASS SPECTROMETRY [LARGE SCALE ANALYSIS]</scope>
</reference>
<reference key="13">
    <citation type="journal article" date="2012" name="Proc. Natl. Acad. Sci. U.S.A.">
        <title>N-terminal acetylome analyses and functional insights of the N-terminal acetyltransferase NatB.</title>
        <authorList>
            <person name="Van Damme P."/>
            <person name="Lasa M."/>
            <person name="Polevoda B."/>
            <person name="Gazquez C."/>
            <person name="Elosegui-Artola A."/>
            <person name="Kim D.S."/>
            <person name="De Juan-Pardo E."/>
            <person name="Demeyer K."/>
            <person name="Hole K."/>
            <person name="Larrea E."/>
            <person name="Timmerman E."/>
            <person name="Prieto J."/>
            <person name="Arnesen T."/>
            <person name="Sherman F."/>
            <person name="Gevaert K."/>
            <person name="Aldabe R."/>
        </authorList>
    </citation>
    <scope>ACETYLATION [LARGE SCALE ANALYSIS] AT MET-1</scope>
    <scope>IDENTIFICATION BY MASS SPECTROMETRY [LARGE SCALE ANALYSIS]</scope>
</reference>
<reference key="14">
    <citation type="journal article" date="2013" name="J. Proteome Res.">
        <title>Toward a comprehensive characterization of a human cancer cell phosphoproteome.</title>
        <authorList>
            <person name="Zhou H."/>
            <person name="Di Palma S."/>
            <person name="Preisinger C."/>
            <person name="Peng M."/>
            <person name="Polat A.N."/>
            <person name="Heck A.J."/>
            <person name="Mohammed S."/>
        </authorList>
    </citation>
    <scope>PHOSPHORYLATION [LARGE SCALE ANALYSIS] AT SER-4; SER-58 AND THR-195</scope>
    <scope>IDENTIFICATION BY MASS SPECTROMETRY [LARGE SCALE ANALYSIS]</scope>
    <source>
        <tissue>Cervix carcinoma</tissue>
        <tissue>Erythroleukemia</tissue>
    </source>
</reference>
<reference key="15">
    <citation type="journal article" date="2014" name="J. Proteomics">
        <title>An enzyme assisted RP-RPLC approach for in-depth analysis of human liver phosphoproteome.</title>
        <authorList>
            <person name="Bian Y."/>
            <person name="Song C."/>
            <person name="Cheng K."/>
            <person name="Dong M."/>
            <person name="Wang F."/>
            <person name="Huang J."/>
            <person name="Sun D."/>
            <person name="Wang L."/>
            <person name="Ye M."/>
            <person name="Zou H."/>
        </authorList>
    </citation>
    <scope>PHOSPHORYLATION [LARGE SCALE ANALYSIS] AT SER-133</scope>
    <scope>IDENTIFICATION BY MASS SPECTROMETRY [LARGE SCALE ANALYSIS]</scope>
    <source>
        <tissue>Liver</tissue>
    </source>
</reference>
<reference key="16">
    <citation type="journal article" date="2015" name="Proteomics">
        <title>N-terminome analysis of the human mitochondrial proteome.</title>
        <authorList>
            <person name="Vaca Jacome A.S."/>
            <person name="Rabilloud T."/>
            <person name="Schaeffer-Reiss C."/>
            <person name="Rompais M."/>
            <person name="Ayoub D."/>
            <person name="Lane L."/>
            <person name="Bairoch A."/>
            <person name="Van Dorsselaer A."/>
            <person name="Carapito C."/>
        </authorList>
    </citation>
    <scope>ACETYLATION [LARGE SCALE ANALYSIS] AT MET-1</scope>
    <scope>CLEAVAGE OF INITIATOR METHIONINE [LARGE SCALE ANALYSIS]</scope>
    <scope>IDENTIFICATION BY MASS SPECTROMETRY [LARGE SCALE ANALYSIS]</scope>
</reference>
<reference key="17">
    <citation type="submission" date="2006-01" db="PDB data bank">
        <title>Structure of human adenylate kinase 2.</title>
        <authorList>
            <person name="Bunkoczi G."/>
            <person name="Filippakopoulos P."/>
            <person name="Debreczeni J.E."/>
            <person name="Turnbull A."/>
            <person name="Papagrigoriou E."/>
            <person name="Savitsky P."/>
            <person name="Colebrook S."/>
            <person name="Von Delft F."/>
            <person name="Arrowsmith C."/>
            <person name="Edwards A."/>
            <person name="Sundstrom M."/>
            <person name="Weigelt J."/>
            <person name="Knapp S."/>
        </authorList>
    </citation>
    <scope>X-RAY CRYSTALLOGRAPHY (2.10 ANGSTROMS) IN COMPLEX WITH BI-SUBSTRATE ANALOG AP4A</scope>
    <scope>DISULFIDE BOND</scope>
</reference>
<reference key="18">
    <citation type="journal article" date="2009" name="Nat. Genet.">
        <title>Reticular dysgenesis (aleukocytosis) is caused by mutations in the gene encoding mitochondrial adenylate kinase 2.</title>
        <authorList>
            <person name="Pannicke U."/>
            <person name="Hoenig M."/>
            <person name="Hess I."/>
            <person name="Friesen C."/>
            <person name="Holzmann K."/>
            <person name="Rump E.-M."/>
            <person name="Barth T.F."/>
            <person name="Rojewski M.T."/>
            <person name="Schulz A."/>
            <person name="Boehm T."/>
            <person name="Friedrich W."/>
            <person name="Schwarz K."/>
        </authorList>
    </citation>
    <scope>INVOLVEMENT IN RDYS</scope>
    <scope>TISSUE SPECIFICITY</scope>
</reference>
<reference key="19">
    <citation type="journal article" date="2009" name="Nat. Genet.">
        <title>Human adenylate kinase 2 deficiency causes a profound hematopoietic defect associated with sensorineural deafness.</title>
        <authorList>
            <person name="Lagresle-Peyrou C."/>
            <person name="Six E.M."/>
            <person name="Picard C."/>
            <person name="Rieux-Laucat F."/>
            <person name="Michel V."/>
            <person name="Ditadi A."/>
            <person name="Chappedelaine C.D."/>
            <person name="Morillon E."/>
            <person name="Valensi F."/>
            <person name="Simon-Stoos K.L."/>
            <person name="Mullikin J.C."/>
            <person name="Noroski L.M."/>
            <person name="Besse C."/>
            <person name="Wulffraat N.M."/>
            <person name="Ferster A."/>
            <person name="Abecasis M.M."/>
            <person name="Calvo F."/>
            <person name="Petit C."/>
            <person name="Candotti F."/>
            <person name="Abel L."/>
            <person name="Fischer A."/>
            <person name="Cavazzana-Calvo M."/>
        </authorList>
    </citation>
    <scope>VARIANTS RDYS TRP-103 AND GLY-165</scope>
    <scope>FUNCTION</scope>
</reference>